<proteinExistence type="inferred from homology"/>
<reference key="1">
    <citation type="journal article" date="2001" name="Nature">
        <title>Complete genome sequence of Salmonella enterica serovar Typhimurium LT2.</title>
        <authorList>
            <person name="McClelland M."/>
            <person name="Sanderson K.E."/>
            <person name="Spieth J."/>
            <person name="Clifton S.W."/>
            <person name="Latreille P."/>
            <person name="Courtney L."/>
            <person name="Porwollik S."/>
            <person name="Ali J."/>
            <person name="Dante M."/>
            <person name="Du F."/>
            <person name="Hou S."/>
            <person name="Layman D."/>
            <person name="Leonard S."/>
            <person name="Nguyen C."/>
            <person name="Scott K."/>
            <person name="Holmes A."/>
            <person name="Grewal N."/>
            <person name="Mulvaney E."/>
            <person name="Ryan E."/>
            <person name="Sun H."/>
            <person name="Florea L."/>
            <person name="Miller W."/>
            <person name="Stoneking T."/>
            <person name="Nhan M."/>
            <person name="Waterston R."/>
            <person name="Wilson R.K."/>
        </authorList>
    </citation>
    <scope>NUCLEOTIDE SEQUENCE [LARGE SCALE GENOMIC DNA]</scope>
    <source>
        <strain>LT2 / SGSC1412 / ATCC 700720</strain>
    </source>
</reference>
<comment type="function">
    <text evidence="1">Catalyzes the excretion of spermidine.</text>
</comment>
<comment type="subunit">
    <text evidence="1">Forms a complex with MdtI.</text>
</comment>
<comment type="subcellular location">
    <subcellularLocation>
        <location evidence="1">Cell inner membrane</location>
        <topology evidence="1">Multi-pass membrane protein</topology>
    </subcellularLocation>
</comment>
<comment type="similarity">
    <text evidence="1">Belongs to the drug/metabolite transporter (DMT) superfamily. Small multidrug resistance (SMR) (TC 2.A.7.1) family. MdtJ subfamily.</text>
</comment>
<name>MDTJ_SALTY</name>
<dbReference type="EMBL" id="AE006468">
    <property type="protein sequence ID" value="AAL20401.1"/>
    <property type="molecule type" value="Genomic_DNA"/>
</dbReference>
<dbReference type="RefSeq" id="WP_000500278.1">
    <property type="nucleotide sequence ID" value="NC_003197.2"/>
</dbReference>
<dbReference type="SMR" id="Q7CQK1"/>
<dbReference type="STRING" id="99287.STM1482"/>
<dbReference type="PaxDb" id="99287-STM1482"/>
<dbReference type="DNASU" id="1253000"/>
<dbReference type="KEGG" id="stm:STM1482"/>
<dbReference type="PATRIC" id="fig|99287.12.peg.1566"/>
<dbReference type="HOGENOM" id="CLU_133067_0_0_6"/>
<dbReference type="OMA" id="MRSWIYL"/>
<dbReference type="PhylomeDB" id="Q7CQK1"/>
<dbReference type="BioCyc" id="SENT99287:STM1482-MONOMER"/>
<dbReference type="Proteomes" id="UP000001014">
    <property type="component" value="Chromosome"/>
</dbReference>
<dbReference type="GO" id="GO:0005886">
    <property type="term" value="C:plasma membrane"/>
    <property type="evidence" value="ECO:0000318"/>
    <property type="project" value="GO_Central"/>
</dbReference>
<dbReference type="GO" id="GO:0015199">
    <property type="term" value="F:amino-acid betaine transmembrane transporter activity"/>
    <property type="evidence" value="ECO:0000318"/>
    <property type="project" value="GO_Central"/>
</dbReference>
<dbReference type="GO" id="GO:0015297">
    <property type="term" value="F:antiporter activity"/>
    <property type="evidence" value="ECO:0000318"/>
    <property type="project" value="GO_Central"/>
</dbReference>
<dbReference type="GO" id="GO:0015220">
    <property type="term" value="F:choline transmembrane transporter activity"/>
    <property type="evidence" value="ECO:0000318"/>
    <property type="project" value="GO_Central"/>
</dbReference>
<dbReference type="GO" id="GO:0015606">
    <property type="term" value="F:spermidine transmembrane transporter activity"/>
    <property type="evidence" value="ECO:0007669"/>
    <property type="project" value="UniProtKB-UniRule"/>
</dbReference>
<dbReference type="GO" id="GO:0015871">
    <property type="term" value="P:choline transport"/>
    <property type="evidence" value="ECO:0000318"/>
    <property type="project" value="GO_Central"/>
</dbReference>
<dbReference type="GO" id="GO:0031460">
    <property type="term" value="P:glycine betaine transport"/>
    <property type="evidence" value="ECO:0000318"/>
    <property type="project" value="GO_Central"/>
</dbReference>
<dbReference type="GO" id="GO:1903711">
    <property type="term" value="P:spermidine transmembrane transport"/>
    <property type="evidence" value="ECO:0000318"/>
    <property type="project" value="GO_Central"/>
</dbReference>
<dbReference type="FunFam" id="1.10.3730.20:FF:000001">
    <property type="entry name" value="Quaternary ammonium compound resistance transporter SugE"/>
    <property type="match status" value="1"/>
</dbReference>
<dbReference type="Gene3D" id="1.10.3730.20">
    <property type="match status" value="1"/>
</dbReference>
<dbReference type="HAMAP" id="MF_01598">
    <property type="entry name" value="MdtJ"/>
    <property type="match status" value="1"/>
</dbReference>
<dbReference type="InterPro" id="IPR000390">
    <property type="entry name" value="Small_drug/metabolite_transptr"/>
</dbReference>
<dbReference type="InterPro" id="IPR045324">
    <property type="entry name" value="Small_multidrug_res"/>
</dbReference>
<dbReference type="InterPro" id="IPR023740">
    <property type="entry name" value="Spermidine_export_MdtJ"/>
</dbReference>
<dbReference type="NCBIfam" id="NF007767">
    <property type="entry name" value="PRK10452.1"/>
    <property type="match status" value="1"/>
</dbReference>
<dbReference type="PANTHER" id="PTHR30561">
    <property type="entry name" value="SMR FAMILY PROTON-DEPENDENT DRUG EFFLUX TRANSPORTER SUGE"/>
    <property type="match status" value="1"/>
</dbReference>
<dbReference type="PANTHER" id="PTHR30561:SF2">
    <property type="entry name" value="SPERMIDINE EXPORT PROTEIN MDTJ"/>
    <property type="match status" value="1"/>
</dbReference>
<dbReference type="Pfam" id="PF00893">
    <property type="entry name" value="Multi_Drug_Res"/>
    <property type="match status" value="1"/>
</dbReference>
<dbReference type="SUPFAM" id="SSF103481">
    <property type="entry name" value="Multidrug resistance efflux transporter EmrE"/>
    <property type="match status" value="1"/>
</dbReference>
<protein>
    <recommendedName>
        <fullName evidence="1">Spermidine export protein MdtJ</fullName>
    </recommendedName>
</protein>
<organism>
    <name type="scientific">Salmonella typhimurium (strain LT2 / SGSC1412 / ATCC 700720)</name>
    <dbReference type="NCBI Taxonomy" id="99287"/>
    <lineage>
        <taxon>Bacteria</taxon>
        <taxon>Pseudomonadati</taxon>
        <taxon>Pseudomonadota</taxon>
        <taxon>Gammaproteobacteria</taxon>
        <taxon>Enterobacterales</taxon>
        <taxon>Enterobacteriaceae</taxon>
        <taxon>Salmonella</taxon>
    </lineage>
</organism>
<sequence length="120" mass="12915">MFYWILLALAIATEITGTLSMKWASVGNGNAGFILMLVMITLSYIFLSFAVKKIALGVAYALWEGIGILFITIFSVLLFDEALSTMKIAGLLTLVAGIVLIKSGTRKPGKPVKEATRATI</sequence>
<accession>Q7CQK1</accession>
<keyword id="KW-0997">Cell inner membrane</keyword>
<keyword id="KW-1003">Cell membrane</keyword>
<keyword id="KW-0472">Membrane</keyword>
<keyword id="KW-1185">Reference proteome</keyword>
<keyword id="KW-0812">Transmembrane</keyword>
<keyword id="KW-1133">Transmembrane helix</keyword>
<keyword id="KW-0813">Transport</keyword>
<feature type="chain" id="PRO_0000331178" description="Spermidine export protein MdtJ">
    <location>
        <begin position="1"/>
        <end position="120"/>
    </location>
</feature>
<feature type="transmembrane region" description="Helical" evidence="1">
    <location>
        <begin position="1"/>
        <end position="21"/>
    </location>
</feature>
<feature type="transmembrane region" description="Helical" evidence="1">
    <location>
        <begin position="31"/>
        <end position="51"/>
    </location>
</feature>
<feature type="transmembrane region" description="Helical" evidence="1">
    <location>
        <begin position="54"/>
        <end position="74"/>
    </location>
</feature>
<feature type="transmembrane region" description="Helical" evidence="1">
    <location>
        <begin position="81"/>
        <end position="101"/>
    </location>
</feature>
<gene>
    <name evidence="1" type="primary">mdtJ</name>
    <name type="ordered locus">STM1482</name>
</gene>
<evidence type="ECO:0000255" key="1">
    <source>
        <dbReference type="HAMAP-Rule" id="MF_01598"/>
    </source>
</evidence>